<proteinExistence type="inferred from homology"/>
<feature type="chain" id="PRO_1000079757" description="GTPase Era">
    <location>
        <begin position="1"/>
        <end position="299"/>
    </location>
</feature>
<feature type="domain" description="Era-type G" evidence="2">
    <location>
        <begin position="4"/>
        <end position="171"/>
    </location>
</feature>
<feature type="domain" description="KH type-2" evidence="1">
    <location>
        <begin position="202"/>
        <end position="280"/>
    </location>
</feature>
<feature type="region of interest" description="G1" evidence="2">
    <location>
        <begin position="12"/>
        <end position="19"/>
    </location>
</feature>
<feature type="region of interest" description="G2" evidence="2">
    <location>
        <begin position="38"/>
        <end position="42"/>
    </location>
</feature>
<feature type="region of interest" description="G3" evidence="2">
    <location>
        <begin position="59"/>
        <end position="62"/>
    </location>
</feature>
<feature type="region of interest" description="G4" evidence="2">
    <location>
        <begin position="121"/>
        <end position="124"/>
    </location>
</feature>
<feature type="region of interest" description="G5" evidence="2">
    <location>
        <begin position="150"/>
        <end position="152"/>
    </location>
</feature>
<feature type="binding site" evidence="1">
    <location>
        <begin position="12"/>
        <end position="19"/>
    </location>
    <ligand>
        <name>GTP</name>
        <dbReference type="ChEBI" id="CHEBI:37565"/>
    </ligand>
</feature>
<feature type="binding site" evidence="1">
    <location>
        <begin position="59"/>
        <end position="63"/>
    </location>
    <ligand>
        <name>GTP</name>
        <dbReference type="ChEBI" id="CHEBI:37565"/>
    </ligand>
</feature>
<feature type="binding site" evidence="1">
    <location>
        <begin position="121"/>
        <end position="124"/>
    </location>
    <ligand>
        <name>GTP</name>
        <dbReference type="ChEBI" id="CHEBI:37565"/>
    </ligand>
</feature>
<comment type="function">
    <text evidence="1">An essential GTPase that binds both GDP and GTP, with rapid nucleotide exchange. Plays a role in 16S rRNA processing and 30S ribosomal subunit biogenesis and possibly also in cell cycle regulation and energy metabolism.</text>
</comment>
<comment type="subunit">
    <text evidence="1">Monomer.</text>
</comment>
<comment type="subcellular location">
    <subcellularLocation>
        <location>Cytoplasm</location>
    </subcellularLocation>
    <subcellularLocation>
        <location evidence="1">Cell membrane</location>
        <topology evidence="1">Peripheral membrane protein</topology>
    </subcellularLocation>
</comment>
<comment type="similarity">
    <text evidence="1 2">Belongs to the TRAFAC class TrmE-Era-EngA-EngB-Septin-like GTPase superfamily. Era GTPase family.</text>
</comment>
<name>ERA_STRS2</name>
<reference key="1">
    <citation type="journal article" date="2007" name="PLoS ONE">
        <title>A glimpse of streptococcal toxic shock syndrome from comparative genomics of S. suis 2 Chinese isolates.</title>
        <authorList>
            <person name="Chen C."/>
            <person name="Tang J."/>
            <person name="Dong W."/>
            <person name="Wang C."/>
            <person name="Feng Y."/>
            <person name="Wang J."/>
            <person name="Zheng F."/>
            <person name="Pan X."/>
            <person name="Liu D."/>
            <person name="Li M."/>
            <person name="Song Y."/>
            <person name="Zhu X."/>
            <person name="Sun H."/>
            <person name="Feng T."/>
            <person name="Guo Z."/>
            <person name="Ju A."/>
            <person name="Ge J."/>
            <person name="Dong Y."/>
            <person name="Sun W."/>
            <person name="Jiang Y."/>
            <person name="Wang J."/>
            <person name="Yan J."/>
            <person name="Yang H."/>
            <person name="Wang X."/>
            <person name="Gao G.F."/>
            <person name="Yang R."/>
            <person name="Wang J."/>
            <person name="Yu J."/>
        </authorList>
    </citation>
    <scope>NUCLEOTIDE SEQUENCE [LARGE SCALE GENOMIC DNA]</scope>
    <source>
        <strain>98HAH33</strain>
    </source>
</reference>
<gene>
    <name evidence="1" type="primary">era</name>
    <name type="ordered locus">SSU98_1410</name>
</gene>
<sequence>MTFKSGFVAILGRPNVGKSTFLNYVMGQKIAIMSDKAQTTRNKIMGIYTTEEEQIVFIDTPGIHKPKTALGDFMVESAYSTLREVDTVLFMVPADEKRGKGDDMIMERLKQAKVPVILVVNKIDKVHPDQLLEQIDDFRQQMDFKEIVPISATQGNNVNRLMEILKENLDEGFQYFPADQITDHPERFLVSEMIREKVLHLTREEIPHSVAVVIESMKRDEFTDKVHIRATIMVERDSQKGIIIGKQGAMLKKIGSMARRDIELMLGDKVFLETWVKVKKNWRDKKLDLADFGYNEKEY</sequence>
<accession>A4W2H9</accession>
<dbReference type="EMBL" id="CP000408">
    <property type="protein sequence ID" value="ABP92568.1"/>
    <property type="molecule type" value="Genomic_DNA"/>
</dbReference>
<dbReference type="SMR" id="A4W2H9"/>
<dbReference type="KEGG" id="ssv:SSU98_1410"/>
<dbReference type="HOGENOM" id="CLU_038009_1_0_9"/>
<dbReference type="GO" id="GO:0005829">
    <property type="term" value="C:cytosol"/>
    <property type="evidence" value="ECO:0007669"/>
    <property type="project" value="TreeGrafter"/>
</dbReference>
<dbReference type="GO" id="GO:0005886">
    <property type="term" value="C:plasma membrane"/>
    <property type="evidence" value="ECO:0007669"/>
    <property type="project" value="UniProtKB-SubCell"/>
</dbReference>
<dbReference type="GO" id="GO:0005525">
    <property type="term" value="F:GTP binding"/>
    <property type="evidence" value="ECO:0007669"/>
    <property type="project" value="UniProtKB-UniRule"/>
</dbReference>
<dbReference type="GO" id="GO:0003924">
    <property type="term" value="F:GTPase activity"/>
    <property type="evidence" value="ECO:0007669"/>
    <property type="project" value="UniProtKB-UniRule"/>
</dbReference>
<dbReference type="GO" id="GO:0043024">
    <property type="term" value="F:ribosomal small subunit binding"/>
    <property type="evidence" value="ECO:0007669"/>
    <property type="project" value="TreeGrafter"/>
</dbReference>
<dbReference type="GO" id="GO:0070181">
    <property type="term" value="F:small ribosomal subunit rRNA binding"/>
    <property type="evidence" value="ECO:0007669"/>
    <property type="project" value="UniProtKB-UniRule"/>
</dbReference>
<dbReference type="GO" id="GO:0000028">
    <property type="term" value="P:ribosomal small subunit assembly"/>
    <property type="evidence" value="ECO:0007669"/>
    <property type="project" value="TreeGrafter"/>
</dbReference>
<dbReference type="CDD" id="cd04163">
    <property type="entry name" value="Era"/>
    <property type="match status" value="1"/>
</dbReference>
<dbReference type="CDD" id="cd22534">
    <property type="entry name" value="KH-II_Era"/>
    <property type="match status" value="1"/>
</dbReference>
<dbReference type="FunFam" id="3.30.300.20:FF:000003">
    <property type="entry name" value="GTPase Era"/>
    <property type="match status" value="1"/>
</dbReference>
<dbReference type="FunFam" id="3.40.50.300:FF:000094">
    <property type="entry name" value="GTPase Era"/>
    <property type="match status" value="1"/>
</dbReference>
<dbReference type="Gene3D" id="3.30.300.20">
    <property type="match status" value="1"/>
</dbReference>
<dbReference type="Gene3D" id="3.40.50.300">
    <property type="entry name" value="P-loop containing nucleotide triphosphate hydrolases"/>
    <property type="match status" value="1"/>
</dbReference>
<dbReference type="HAMAP" id="MF_00367">
    <property type="entry name" value="GTPase_Era"/>
    <property type="match status" value="1"/>
</dbReference>
<dbReference type="InterPro" id="IPR030388">
    <property type="entry name" value="G_ERA_dom"/>
</dbReference>
<dbReference type="InterPro" id="IPR006073">
    <property type="entry name" value="GTP-bd"/>
</dbReference>
<dbReference type="InterPro" id="IPR005662">
    <property type="entry name" value="GTPase_Era-like"/>
</dbReference>
<dbReference type="InterPro" id="IPR015946">
    <property type="entry name" value="KH_dom-like_a/b"/>
</dbReference>
<dbReference type="InterPro" id="IPR004044">
    <property type="entry name" value="KH_dom_type_2"/>
</dbReference>
<dbReference type="InterPro" id="IPR009019">
    <property type="entry name" value="KH_sf_prok-type"/>
</dbReference>
<dbReference type="InterPro" id="IPR027417">
    <property type="entry name" value="P-loop_NTPase"/>
</dbReference>
<dbReference type="InterPro" id="IPR005225">
    <property type="entry name" value="Small_GTP-bd"/>
</dbReference>
<dbReference type="NCBIfam" id="TIGR00436">
    <property type="entry name" value="era"/>
    <property type="match status" value="1"/>
</dbReference>
<dbReference type="NCBIfam" id="NF000908">
    <property type="entry name" value="PRK00089.1"/>
    <property type="match status" value="1"/>
</dbReference>
<dbReference type="NCBIfam" id="TIGR00231">
    <property type="entry name" value="small_GTP"/>
    <property type="match status" value="1"/>
</dbReference>
<dbReference type="PANTHER" id="PTHR42698">
    <property type="entry name" value="GTPASE ERA"/>
    <property type="match status" value="1"/>
</dbReference>
<dbReference type="PANTHER" id="PTHR42698:SF1">
    <property type="entry name" value="GTPASE ERA, MITOCHONDRIAL"/>
    <property type="match status" value="1"/>
</dbReference>
<dbReference type="Pfam" id="PF07650">
    <property type="entry name" value="KH_2"/>
    <property type="match status" value="1"/>
</dbReference>
<dbReference type="Pfam" id="PF01926">
    <property type="entry name" value="MMR_HSR1"/>
    <property type="match status" value="1"/>
</dbReference>
<dbReference type="SUPFAM" id="SSF52540">
    <property type="entry name" value="P-loop containing nucleoside triphosphate hydrolases"/>
    <property type="match status" value="1"/>
</dbReference>
<dbReference type="SUPFAM" id="SSF54814">
    <property type="entry name" value="Prokaryotic type KH domain (KH-domain type II)"/>
    <property type="match status" value="1"/>
</dbReference>
<dbReference type="PROSITE" id="PS51713">
    <property type="entry name" value="G_ERA"/>
    <property type="match status" value="1"/>
</dbReference>
<dbReference type="PROSITE" id="PS50823">
    <property type="entry name" value="KH_TYPE_2"/>
    <property type="match status" value="1"/>
</dbReference>
<keyword id="KW-1003">Cell membrane</keyword>
<keyword id="KW-0963">Cytoplasm</keyword>
<keyword id="KW-0342">GTP-binding</keyword>
<keyword id="KW-0472">Membrane</keyword>
<keyword id="KW-0547">Nucleotide-binding</keyword>
<keyword id="KW-0690">Ribosome biogenesis</keyword>
<keyword id="KW-0694">RNA-binding</keyword>
<keyword id="KW-0699">rRNA-binding</keyword>
<organism>
    <name type="scientific">Streptococcus suis (strain 98HAH33)</name>
    <dbReference type="NCBI Taxonomy" id="391296"/>
    <lineage>
        <taxon>Bacteria</taxon>
        <taxon>Bacillati</taxon>
        <taxon>Bacillota</taxon>
        <taxon>Bacilli</taxon>
        <taxon>Lactobacillales</taxon>
        <taxon>Streptococcaceae</taxon>
        <taxon>Streptococcus</taxon>
    </lineage>
</organism>
<protein>
    <recommendedName>
        <fullName evidence="1">GTPase Era</fullName>
    </recommendedName>
</protein>
<evidence type="ECO:0000255" key="1">
    <source>
        <dbReference type="HAMAP-Rule" id="MF_00367"/>
    </source>
</evidence>
<evidence type="ECO:0000255" key="2">
    <source>
        <dbReference type="PROSITE-ProRule" id="PRU01050"/>
    </source>
</evidence>